<reference key="1">
    <citation type="journal article" date="1993" name="J. Mol. Evol.">
        <title>Molecular characterization and evolution of a duck mitochondrial genome.</title>
        <authorList>
            <person name="Ramirez V."/>
            <person name="Savoie P."/>
            <person name="Morais R."/>
        </authorList>
    </citation>
    <scope>NUCLEOTIDE SEQUENCE [GENOMIC DNA]</scope>
    <source>
        <strain>Pekin breed</strain>
        <tissue>Liver</tissue>
    </source>
</reference>
<reference key="2">
    <citation type="journal article" date="1993" name="Biochem. Int.">
        <title>A gene cytochrome C oxidase subunit II in duck mitochondrial DNA: structural features and sequence evolution.</title>
        <authorList>
            <person name="Pan Y.F."/>
            <person name="Lee Y.H.W."/>
            <person name="Wei Y.H."/>
            <person name="Chiang A.N."/>
        </authorList>
    </citation>
    <scope>NUCLEOTIDE SEQUENCE [GENOMIC DNA]</scope>
    <source>
        <strain>Pekin breed</strain>
        <tissue>Liver</tissue>
    </source>
</reference>
<reference key="3">
    <citation type="journal article" date="1990" name="Curr. Genet.">
        <title>Gene organization of the Peking duck mitochondrial genome.</title>
        <authorList>
            <person name="Desjardins P."/>
            <person name="Ramirez V."/>
            <person name="Morais R."/>
        </authorList>
    </citation>
    <scope>NUCLEOTIDE SEQUENCE [GENOMIC DNA] OF 22-54</scope>
    <source>
        <strain>Pekin breed</strain>
        <tissue>Liver</tissue>
    </source>
</reference>
<proteinExistence type="inferred from homology"/>
<organism>
    <name type="scientific">Anas platyrhynchos</name>
    <name type="common">Mallard</name>
    <name type="synonym">Anas boschas</name>
    <dbReference type="NCBI Taxonomy" id="8839"/>
    <lineage>
        <taxon>Eukaryota</taxon>
        <taxon>Metazoa</taxon>
        <taxon>Chordata</taxon>
        <taxon>Craniata</taxon>
        <taxon>Vertebrata</taxon>
        <taxon>Euteleostomi</taxon>
        <taxon>Archelosauria</taxon>
        <taxon>Archosauria</taxon>
        <taxon>Dinosauria</taxon>
        <taxon>Saurischia</taxon>
        <taxon>Theropoda</taxon>
        <taxon>Coelurosauria</taxon>
        <taxon>Aves</taxon>
        <taxon>Neognathae</taxon>
        <taxon>Galloanserae</taxon>
        <taxon>Anseriformes</taxon>
        <taxon>Anatidae</taxon>
        <taxon>Anatinae</taxon>
        <taxon>Anas</taxon>
    </lineage>
</organism>
<dbReference type="EC" id="7.1.1.9"/>
<dbReference type="EMBL" id="L22476">
    <property type="protein sequence ID" value="AAA72039.1"/>
    <property type="molecule type" value="Genomic_DNA"/>
</dbReference>
<dbReference type="EMBL" id="X68507">
    <property type="protein sequence ID" value="CAA48519.1"/>
    <property type="molecule type" value="Genomic_DNA"/>
</dbReference>
<dbReference type="EMBL" id="X55531">
    <property type="protein sequence ID" value="CAA39147.1"/>
    <property type="molecule type" value="Genomic_DNA"/>
</dbReference>
<dbReference type="SMR" id="P98019"/>
<dbReference type="KEGG" id="apla:5405812"/>
<dbReference type="CTD" id="4513"/>
<dbReference type="OrthoDB" id="539285at2759"/>
<dbReference type="Proteomes" id="UP000694400">
    <property type="component" value="Unplaced"/>
</dbReference>
<dbReference type="GO" id="GO:0005743">
    <property type="term" value="C:mitochondrial inner membrane"/>
    <property type="evidence" value="ECO:0007669"/>
    <property type="project" value="UniProtKB-SubCell"/>
</dbReference>
<dbReference type="GO" id="GO:0045277">
    <property type="term" value="C:respiratory chain complex IV"/>
    <property type="evidence" value="ECO:0000250"/>
    <property type="project" value="UniProtKB"/>
</dbReference>
<dbReference type="GO" id="GO:0005507">
    <property type="term" value="F:copper ion binding"/>
    <property type="evidence" value="ECO:0007669"/>
    <property type="project" value="InterPro"/>
</dbReference>
<dbReference type="GO" id="GO:0004129">
    <property type="term" value="F:cytochrome-c oxidase activity"/>
    <property type="evidence" value="ECO:0007669"/>
    <property type="project" value="UniProtKB-EC"/>
</dbReference>
<dbReference type="GO" id="GO:0042773">
    <property type="term" value="P:ATP synthesis coupled electron transport"/>
    <property type="evidence" value="ECO:0007669"/>
    <property type="project" value="TreeGrafter"/>
</dbReference>
<dbReference type="CDD" id="cd13912">
    <property type="entry name" value="CcO_II_C"/>
    <property type="match status" value="1"/>
</dbReference>
<dbReference type="FunFam" id="1.10.287.90:FF:000001">
    <property type="entry name" value="Cytochrome c oxidase subunit 2"/>
    <property type="match status" value="1"/>
</dbReference>
<dbReference type="FunFam" id="2.60.40.420:FF:000001">
    <property type="entry name" value="Cytochrome c oxidase subunit 2"/>
    <property type="match status" value="1"/>
</dbReference>
<dbReference type="Gene3D" id="1.10.287.90">
    <property type="match status" value="1"/>
</dbReference>
<dbReference type="Gene3D" id="2.60.40.420">
    <property type="entry name" value="Cupredoxins - blue copper proteins"/>
    <property type="match status" value="1"/>
</dbReference>
<dbReference type="InterPro" id="IPR045187">
    <property type="entry name" value="CcO_II"/>
</dbReference>
<dbReference type="InterPro" id="IPR002429">
    <property type="entry name" value="CcO_II-like_C"/>
</dbReference>
<dbReference type="InterPro" id="IPR034210">
    <property type="entry name" value="CcO_II_C"/>
</dbReference>
<dbReference type="InterPro" id="IPR001505">
    <property type="entry name" value="Copper_CuA"/>
</dbReference>
<dbReference type="InterPro" id="IPR008972">
    <property type="entry name" value="Cupredoxin"/>
</dbReference>
<dbReference type="InterPro" id="IPR014222">
    <property type="entry name" value="Cyt_c_oxidase_su2"/>
</dbReference>
<dbReference type="InterPro" id="IPR011759">
    <property type="entry name" value="Cyt_c_oxidase_su2_TM_dom"/>
</dbReference>
<dbReference type="InterPro" id="IPR036257">
    <property type="entry name" value="Cyt_c_oxidase_su2_TM_sf"/>
</dbReference>
<dbReference type="NCBIfam" id="TIGR02866">
    <property type="entry name" value="CoxB"/>
    <property type="match status" value="1"/>
</dbReference>
<dbReference type="PANTHER" id="PTHR22888:SF9">
    <property type="entry name" value="CYTOCHROME C OXIDASE SUBUNIT 2"/>
    <property type="match status" value="1"/>
</dbReference>
<dbReference type="PANTHER" id="PTHR22888">
    <property type="entry name" value="CYTOCHROME C OXIDASE, SUBUNIT II"/>
    <property type="match status" value="1"/>
</dbReference>
<dbReference type="Pfam" id="PF00116">
    <property type="entry name" value="COX2"/>
    <property type="match status" value="1"/>
</dbReference>
<dbReference type="Pfam" id="PF02790">
    <property type="entry name" value="COX2_TM"/>
    <property type="match status" value="1"/>
</dbReference>
<dbReference type="PRINTS" id="PR01166">
    <property type="entry name" value="CYCOXIDASEII"/>
</dbReference>
<dbReference type="SUPFAM" id="SSF49503">
    <property type="entry name" value="Cupredoxins"/>
    <property type="match status" value="1"/>
</dbReference>
<dbReference type="SUPFAM" id="SSF81464">
    <property type="entry name" value="Cytochrome c oxidase subunit II-like, transmembrane region"/>
    <property type="match status" value="1"/>
</dbReference>
<dbReference type="PROSITE" id="PS00078">
    <property type="entry name" value="COX2"/>
    <property type="match status" value="1"/>
</dbReference>
<dbReference type="PROSITE" id="PS50857">
    <property type="entry name" value="COX2_CUA"/>
    <property type="match status" value="1"/>
</dbReference>
<dbReference type="PROSITE" id="PS50999">
    <property type="entry name" value="COX2_TM"/>
    <property type="match status" value="1"/>
</dbReference>
<sequence>MANHSQLGFQDASSPIMEELVEFHDHALIVALAICSLVLYLLAHMLMEKLSSNAVDAQEVELIWTILPAIVLVLLALPSLQILYMMDEIDEPDLTLKAIGHQWYWSYEYTDFKDLSFDSYMIPTTDLPNGHFRLLEVDHRVVVPMESPIRVIITAGDVLHSWAVPTLGVKTDAIPGRLNQTSFITTRPGIFYGQCSEICGANHSYMPIVVESTPLPYFEAWSSLLSSS</sequence>
<accession>P98019</accession>
<geneLocation type="mitochondrion"/>
<evidence type="ECO:0000250" key="1">
    <source>
        <dbReference type="UniProtKB" id="P00403"/>
    </source>
</evidence>
<evidence type="ECO:0000250" key="2">
    <source>
        <dbReference type="UniProtKB" id="P00410"/>
    </source>
</evidence>
<evidence type="ECO:0000250" key="3">
    <source>
        <dbReference type="UniProtKB" id="P68530"/>
    </source>
</evidence>
<evidence type="ECO:0000305" key="4"/>
<protein>
    <recommendedName>
        <fullName>Cytochrome c oxidase subunit 2</fullName>
        <ecNumber>7.1.1.9</ecNumber>
    </recommendedName>
    <alternativeName>
        <fullName>Cytochrome c oxidase polypeptide II</fullName>
    </alternativeName>
</protein>
<name>COX2_ANAPL</name>
<comment type="function">
    <text evidence="2">Component of the cytochrome c oxidase, the last enzyme in the mitochondrial electron transport chain which drives oxidative phosphorylation. The respiratory chain contains 3 multisubunit complexes succinate dehydrogenase (complex II, CII), ubiquinol-cytochrome c oxidoreductase (cytochrome b-c1 complex, complex III, CIII) and cytochrome c oxidase (complex IV, CIV), that cooperate to transfer electrons derived from NADH and succinate to molecular oxygen, creating an electrochemical gradient over the inner membrane that drives transmembrane transport and the ATP synthase. Cytochrome c oxidase is the component of the respiratory chain that catalyzes the reduction of oxygen to water. Electrons originating from reduced cytochrome c in the intermembrane space (IMS) are transferred via the dinuclear copper A center (CU(A)) of subunit 2 and heme A of subunit 1 to the active site in subunit 1, a binuclear center (BNC) formed by heme A3 and copper B (CU(B)). The BNC reduces molecular oxygen to 2 water molecules using 4 electrons from cytochrome c in the IMS and 4 protons from the mitochondrial matrix.</text>
</comment>
<comment type="catalytic activity">
    <reaction evidence="2">
        <text>4 Fe(II)-[cytochrome c] + O2 + 8 H(+)(in) = 4 Fe(III)-[cytochrome c] + 2 H2O + 4 H(+)(out)</text>
        <dbReference type="Rhea" id="RHEA:11436"/>
        <dbReference type="Rhea" id="RHEA-COMP:10350"/>
        <dbReference type="Rhea" id="RHEA-COMP:14399"/>
        <dbReference type="ChEBI" id="CHEBI:15377"/>
        <dbReference type="ChEBI" id="CHEBI:15378"/>
        <dbReference type="ChEBI" id="CHEBI:15379"/>
        <dbReference type="ChEBI" id="CHEBI:29033"/>
        <dbReference type="ChEBI" id="CHEBI:29034"/>
        <dbReference type="EC" id="7.1.1.9"/>
    </reaction>
    <physiologicalReaction direction="left-to-right" evidence="2">
        <dbReference type="Rhea" id="RHEA:11437"/>
    </physiologicalReaction>
</comment>
<comment type="cofactor">
    <cofactor evidence="3">
        <name>Cu cation</name>
        <dbReference type="ChEBI" id="CHEBI:23378"/>
    </cofactor>
    <text evidence="3">Binds a dinuclear copper A center per subunit.</text>
</comment>
<comment type="subunit">
    <text evidence="1 3">Component of the cytochrome c oxidase (complex IV, CIV), a multisubunit enzyme composed of 14 subunits. The complex is composed of a catalytic core of 3 subunits MT-CO1, MT-CO2 and MT-CO3, encoded in the mitochondrial DNA, and 11 supernumerary subunits COX4I, COX5A, COX5B, COX6A, COX6B, COX6C, COX7A, COX7B, COX7C, COX8 and NDUFA4, which are encoded in the nuclear genome. The complex exists as a monomer or a dimer and forms supercomplexes (SCs) in the inner mitochondrial membrane with NADH-ubiquinone oxidoreductase (complex I, CI) and ubiquinol-cytochrome c oxidoreductase (cytochrome b-c1 complex, complex III, CIII), resulting in different assemblies (supercomplex SCI(1)III(2)IV(1) and megacomplex MCI(2)III(2)IV(2)) (By similarity). Found in a complex with TMEM177, COA6, COX18, COX20, SCO1 and SCO2. Interacts with TMEM177 in a COX20-dependent manner. Interacts with COX20. Interacts with COX16 (By similarity).</text>
</comment>
<comment type="subcellular location">
    <subcellularLocation>
        <location evidence="3">Mitochondrion inner membrane</location>
        <topology evidence="3">Multi-pass membrane protein</topology>
    </subcellularLocation>
</comment>
<comment type="similarity">
    <text evidence="4">Belongs to the cytochrome c oxidase subunit 2 family.</text>
</comment>
<feature type="chain" id="PRO_0000183492" description="Cytochrome c oxidase subunit 2">
    <location>
        <begin position="1"/>
        <end position="228"/>
    </location>
</feature>
<feature type="topological domain" description="Mitochondrial intermembrane" evidence="3">
    <location>
        <begin position="1"/>
        <end position="14"/>
    </location>
</feature>
<feature type="transmembrane region" description="Helical; Name=I" evidence="3">
    <location>
        <begin position="15"/>
        <end position="45"/>
    </location>
</feature>
<feature type="topological domain" description="Mitochondrial matrix" evidence="3">
    <location>
        <begin position="46"/>
        <end position="58"/>
    </location>
</feature>
<feature type="transmembrane region" description="Helical; Name=II" evidence="3">
    <location>
        <begin position="59"/>
        <end position="86"/>
    </location>
</feature>
<feature type="topological domain" description="Mitochondrial intermembrane" evidence="3">
    <location>
        <begin position="87"/>
        <end position="228"/>
    </location>
</feature>
<feature type="binding site" evidence="3">
    <location>
        <position position="160"/>
    </location>
    <ligand>
        <name>Cu cation</name>
        <dbReference type="ChEBI" id="CHEBI:23378"/>
        <label>A1</label>
    </ligand>
</feature>
<feature type="binding site" evidence="3">
    <location>
        <position position="195"/>
    </location>
    <ligand>
        <name>Cu cation</name>
        <dbReference type="ChEBI" id="CHEBI:23378"/>
        <label>A1</label>
    </ligand>
</feature>
<feature type="binding site" evidence="3">
    <location>
        <position position="195"/>
    </location>
    <ligand>
        <name>Cu cation</name>
        <dbReference type="ChEBI" id="CHEBI:23378"/>
        <label>A2</label>
    </ligand>
</feature>
<feature type="binding site" evidence="3">
    <location>
        <position position="197"/>
    </location>
    <ligand>
        <name>Cu cation</name>
        <dbReference type="ChEBI" id="CHEBI:23378"/>
        <label>A2</label>
    </ligand>
</feature>
<feature type="binding site" evidence="3">
    <location>
        <position position="197"/>
    </location>
    <ligand>
        <name>Mg(2+)</name>
        <dbReference type="ChEBI" id="CHEBI:18420"/>
        <note>ligand shared with MT-CO1</note>
    </ligand>
</feature>
<feature type="binding site" evidence="3">
    <location>
        <position position="199"/>
    </location>
    <ligand>
        <name>Cu cation</name>
        <dbReference type="ChEBI" id="CHEBI:23378"/>
        <label>A1</label>
    </ligand>
</feature>
<feature type="binding site" evidence="3">
    <location>
        <position position="199"/>
    </location>
    <ligand>
        <name>Cu cation</name>
        <dbReference type="ChEBI" id="CHEBI:23378"/>
        <label>A2</label>
    </ligand>
</feature>
<feature type="binding site" evidence="3">
    <location>
        <position position="203"/>
    </location>
    <ligand>
        <name>Cu cation</name>
        <dbReference type="ChEBI" id="CHEBI:23378"/>
        <label>A2</label>
    </ligand>
</feature>
<feature type="binding site" evidence="3">
    <location>
        <position position="206"/>
    </location>
    <ligand>
        <name>Cu cation</name>
        <dbReference type="ChEBI" id="CHEBI:23378"/>
        <label>A1</label>
    </ligand>
</feature>
<keyword id="KW-0186">Copper</keyword>
<keyword id="KW-0249">Electron transport</keyword>
<keyword id="KW-0460">Magnesium</keyword>
<keyword id="KW-0472">Membrane</keyword>
<keyword id="KW-0479">Metal-binding</keyword>
<keyword id="KW-0496">Mitochondrion</keyword>
<keyword id="KW-0999">Mitochondrion inner membrane</keyword>
<keyword id="KW-0679">Respiratory chain</keyword>
<keyword id="KW-1278">Translocase</keyword>
<keyword id="KW-0812">Transmembrane</keyword>
<keyword id="KW-1133">Transmembrane helix</keyword>
<keyword id="KW-0813">Transport</keyword>
<gene>
    <name type="primary">MT-CO2</name>
    <name type="synonym">COII</name>
    <name type="synonym">COXII</name>
    <name type="synonym">MTCO2</name>
</gene>